<comment type="function">
    <text evidence="2">Binds specifically to voltage-gated sodium channels (Nav), thereby delaying their inactivation during signal transduction. It strongly stimulates mammalian cardiac muscle contraction. Paralyzes the shore crab (C.maenas) by tetanic contractions after intramuscular injection.</text>
</comment>
<comment type="subcellular location">
    <subcellularLocation>
        <location evidence="2 3">Secreted</location>
    </subcellularLocation>
</comment>
<comment type="tissue specificity">
    <text evidence="8">Expressed in ectodermal glands. Not expressed in nematocytes.</text>
</comment>
<comment type="toxic dose">
    <text evidence="2">LD(50) is 1 ug/kg by intramuscular injection into crabs (C.maenas).</text>
</comment>
<comment type="similarity">
    <text evidence="7">Belongs to the sea anemone sodium channel inhibitory toxin family. Type I subfamily.</text>
</comment>
<comment type="online information" name="Wikipedia">
    <link uri="https://en.wikipedia.org/wiki/Anthopleurin"/>
</comment>
<dbReference type="PIR" id="A01793">
    <property type="entry name" value="NAXACE"/>
</dbReference>
<dbReference type="SMR" id="P01532"/>
<dbReference type="GO" id="GO:0005576">
    <property type="term" value="C:extracellular region"/>
    <property type="evidence" value="ECO:0007669"/>
    <property type="project" value="UniProtKB-SubCell"/>
</dbReference>
<dbReference type="GO" id="GO:0017080">
    <property type="term" value="F:sodium channel regulator activity"/>
    <property type="evidence" value="ECO:0007669"/>
    <property type="project" value="UniProtKB-KW"/>
</dbReference>
<dbReference type="GO" id="GO:0090729">
    <property type="term" value="F:toxin activity"/>
    <property type="evidence" value="ECO:0007669"/>
    <property type="project" value="UniProtKB-KW"/>
</dbReference>
<dbReference type="GO" id="GO:0009966">
    <property type="term" value="P:regulation of signal transduction"/>
    <property type="evidence" value="ECO:0007669"/>
    <property type="project" value="InterPro"/>
</dbReference>
<dbReference type="Gene3D" id="2.20.20.10">
    <property type="entry name" value="Anthopleurin-A"/>
    <property type="match status" value="1"/>
</dbReference>
<dbReference type="InterPro" id="IPR000693">
    <property type="entry name" value="Anenome_toxin"/>
</dbReference>
<dbReference type="InterPro" id="IPR023355">
    <property type="entry name" value="Myo_ane_neurotoxin_sf"/>
</dbReference>
<dbReference type="Pfam" id="PF00706">
    <property type="entry name" value="Toxin_4"/>
    <property type="match status" value="1"/>
</dbReference>
<dbReference type="PIRSF" id="PIRSF001905">
    <property type="entry name" value="Anenome_toxin"/>
    <property type="match status" value="1"/>
</dbReference>
<dbReference type="SUPFAM" id="SSF57392">
    <property type="entry name" value="Defensin-like"/>
    <property type="match status" value="1"/>
</dbReference>
<protein>
    <recommendedName>
        <fullName evidence="5">Delta-actitoxin-Ael1a</fullName>
        <shortName evidence="5">Delta-AITX-Ael1a</shortName>
    </recommendedName>
    <alternativeName>
        <fullName evidence="4">APE 2-1</fullName>
    </alternativeName>
    <alternativeName>
        <fullName evidence="6">Anthopleurin-C</fullName>
        <shortName evidence="6">AP-C</shortName>
        <shortName evidence="7">ApC</shortName>
    </alternativeName>
</protein>
<organism>
    <name type="scientific">Anthopleura elegantissima</name>
    <name type="common">Green aggregating anemone</name>
    <name type="synonym">Actinia elegantissima</name>
    <dbReference type="NCBI Taxonomy" id="6110"/>
    <lineage>
        <taxon>Eukaryota</taxon>
        <taxon>Metazoa</taxon>
        <taxon>Cnidaria</taxon>
        <taxon>Anthozoa</taxon>
        <taxon>Hexacorallia</taxon>
        <taxon>Actiniaria</taxon>
        <taxon>Actiniidae</taxon>
        <taxon>Anthopleura</taxon>
    </lineage>
</organism>
<name>NA1C_ANTEL</name>
<evidence type="ECO:0000250" key="1">
    <source>
        <dbReference type="UniProtKB" id="P10454"/>
    </source>
</evidence>
<evidence type="ECO:0000269" key="2">
    <source>
    </source>
</evidence>
<evidence type="ECO:0000269" key="3">
    <source>
    </source>
</evidence>
<evidence type="ECO:0000303" key="4">
    <source>
    </source>
</evidence>
<evidence type="ECO:0000303" key="5">
    <source>
    </source>
</evidence>
<evidence type="ECO:0000303" key="6">
    <source>
    </source>
</evidence>
<evidence type="ECO:0000305" key="7"/>
<evidence type="ECO:0000305" key="8">
    <source>
    </source>
</evidence>
<sequence length="47" mass="4884">GVPCLCDSDGPSVRGNTLSGILWLAGCPSGWHNCKAHGPTIGWCCKQ</sequence>
<feature type="chain" id="PRO_0000221517" description="Delta-actitoxin-Ael1a" evidence="2 3">
    <location>
        <begin position="1"/>
        <end position="47"/>
    </location>
</feature>
<feature type="disulfide bond" evidence="1">
    <location>
        <begin position="4"/>
        <end position="44"/>
    </location>
</feature>
<feature type="disulfide bond" evidence="1">
    <location>
        <begin position="6"/>
        <end position="34"/>
    </location>
</feature>
<feature type="disulfide bond" evidence="1">
    <location>
        <begin position="27"/>
        <end position="45"/>
    </location>
</feature>
<accession>P01532</accession>
<accession>P0C1F2</accession>
<proteinExistence type="evidence at protein level"/>
<keyword id="KW-0123">Cardiotoxin</keyword>
<keyword id="KW-0903">Direct protein sequencing</keyword>
<keyword id="KW-1015">Disulfide bond</keyword>
<keyword id="KW-0872">Ion channel impairing toxin</keyword>
<keyword id="KW-0528">Neurotoxin</keyword>
<keyword id="KW-0964">Secreted</keyword>
<keyword id="KW-0800">Toxin</keyword>
<keyword id="KW-0738">Voltage-gated sodium channel impairing toxin</keyword>
<reference key="1">
    <citation type="journal article" date="1981" name="Fed. Proc.">
        <title>Cardiotonic polypeptides from Anthopleura xanthogrammica (Brandt) and A. elegantissima (Brandt).</title>
        <authorList>
            <person name="Norton T.R."/>
        </authorList>
    </citation>
    <scope>PROTEIN SEQUENCE</scope>
    <scope>SUBCELLULAR LOCATION</scope>
</reference>
<reference key="2">
    <citation type="journal article" date="2001" name="Toxicon">
        <title>Isolation and characterisation of five neurotoxic and cardiotoxic polypeptides from the sea anemone Anthopleura elegantissima.</title>
        <authorList>
            <person name="Bruhn T."/>
            <person name="Schaller C."/>
            <person name="Schulze C."/>
            <person name="Sanchez-Rodriguez J."/>
            <person name="Dannmeier C."/>
            <person name="Ravens U."/>
            <person name="Heubach J.F."/>
            <person name="Eckhardt K."/>
            <person name="Schmidtmayer J."/>
            <person name="Schmidt H."/>
            <person name="Aneiros A."/>
            <person name="Wachter E."/>
            <person name="Beress L."/>
        </authorList>
    </citation>
    <scope>PROTEIN SEQUENCE</scope>
    <scope>FUNCTION</scope>
    <scope>TOXIC DOSE</scope>
    <scope>SUBCELLULAR LOCATION</scope>
</reference>
<reference key="3">
    <citation type="journal article" date="2012" name="Proc. R. Soc. B">
        <title>Neurotoxin localization to ectodermal gland cells uncovers an alternative mechanism of venom delivery in sea anemones.</title>
        <authorList>
            <person name="Moran Y."/>
            <person name="Genikhovich G."/>
            <person name="Gordon D."/>
            <person name="Wienkoop S."/>
            <person name="Zenkert C."/>
            <person name="Ozbek S."/>
            <person name="Technau U."/>
            <person name="Gurevitz M."/>
        </authorList>
    </citation>
    <scope>TISSUE SPECIFICITY</scope>
    <scope>DEVELOPMENTAL STAGE</scope>
</reference>
<reference key="4">
    <citation type="journal article" date="2012" name="Toxicon">
        <title>Development of a rational nomenclature for naming peptide and protein toxins from sea anemones.</title>
        <authorList>
            <person name="Oliveira J.S."/>
            <person name="Fuentes-Silva D."/>
            <person name="King G.F."/>
        </authorList>
    </citation>
    <scope>NOMENCLATURE</scope>
</reference>